<gene>
    <name type="ordered locus">Rru_A3581</name>
</gene>
<sequence length="96" mass="10653">MTDRLDDPALDRQLADHPDWTITSARTALTRSFGFKDFSEAFGFMARVALEAQAQDHHPDWSNSYNRVDITLSTHDSGGLSAKDFALAKAIDRIVG</sequence>
<reference key="1">
    <citation type="journal article" date="2011" name="Stand. Genomic Sci.">
        <title>Complete genome sequence of Rhodospirillum rubrum type strain (S1).</title>
        <authorList>
            <person name="Munk A.C."/>
            <person name="Copeland A."/>
            <person name="Lucas S."/>
            <person name="Lapidus A."/>
            <person name="Del Rio T.G."/>
            <person name="Barry K."/>
            <person name="Detter J.C."/>
            <person name="Hammon N."/>
            <person name="Israni S."/>
            <person name="Pitluck S."/>
            <person name="Brettin T."/>
            <person name="Bruce D."/>
            <person name="Han C."/>
            <person name="Tapia R."/>
            <person name="Gilna P."/>
            <person name="Schmutz J."/>
            <person name="Larimer F."/>
            <person name="Land M."/>
            <person name="Kyrpides N.C."/>
            <person name="Mavromatis K."/>
            <person name="Richardson P."/>
            <person name="Rohde M."/>
            <person name="Goeker M."/>
            <person name="Klenk H.P."/>
            <person name="Zhang Y."/>
            <person name="Roberts G.P."/>
            <person name="Reslewic S."/>
            <person name="Schwartz D.C."/>
        </authorList>
    </citation>
    <scope>NUCLEOTIDE SEQUENCE [LARGE SCALE GENOMIC DNA]</scope>
    <source>
        <strain>ATCC 11170 / ATH 1.1.1 / DSM 467 / LMG 4362 / NCIMB 8255 / S1</strain>
    </source>
</reference>
<protein>
    <recommendedName>
        <fullName evidence="1">Putative pterin-4-alpha-carbinolamine dehydratase</fullName>
        <shortName evidence="1">PHS</shortName>
        <ecNumber evidence="1">4.2.1.96</ecNumber>
    </recommendedName>
    <alternativeName>
        <fullName evidence="1">4-alpha-hydroxy-tetrahydropterin dehydratase</fullName>
    </alternativeName>
    <alternativeName>
        <fullName evidence="1">Pterin carbinolamine dehydratase</fullName>
        <shortName evidence="1">PCD</shortName>
    </alternativeName>
</protein>
<dbReference type="EC" id="4.2.1.96" evidence="1"/>
<dbReference type="EMBL" id="CP000230">
    <property type="protein sequence ID" value="ABC24375.1"/>
    <property type="molecule type" value="Genomic_DNA"/>
</dbReference>
<dbReference type="RefSeq" id="WP_011391328.1">
    <property type="nucleotide sequence ID" value="NC_007643.1"/>
</dbReference>
<dbReference type="RefSeq" id="YP_428662.1">
    <property type="nucleotide sequence ID" value="NC_007643.1"/>
</dbReference>
<dbReference type="SMR" id="Q2RNC0"/>
<dbReference type="STRING" id="269796.Rru_A3581"/>
<dbReference type="EnsemblBacteria" id="ABC24375">
    <property type="protein sequence ID" value="ABC24375"/>
    <property type="gene ID" value="Rru_A3581"/>
</dbReference>
<dbReference type="KEGG" id="rru:Rru_A3581"/>
<dbReference type="PATRIC" id="fig|269796.9.peg.3702"/>
<dbReference type="eggNOG" id="COG2154">
    <property type="taxonomic scope" value="Bacteria"/>
</dbReference>
<dbReference type="HOGENOM" id="CLU_081974_3_2_5"/>
<dbReference type="PhylomeDB" id="Q2RNC0"/>
<dbReference type="Proteomes" id="UP000001929">
    <property type="component" value="Chromosome"/>
</dbReference>
<dbReference type="GO" id="GO:0008124">
    <property type="term" value="F:4-alpha-hydroxytetrahydrobiopterin dehydratase activity"/>
    <property type="evidence" value="ECO:0007669"/>
    <property type="project" value="UniProtKB-UniRule"/>
</dbReference>
<dbReference type="GO" id="GO:0006729">
    <property type="term" value="P:tetrahydrobiopterin biosynthetic process"/>
    <property type="evidence" value="ECO:0007669"/>
    <property type="project" value="InterPro"/>
</dbReference>
<dbReference type="CDD" id="cd00914">
    <property type="entry name" value="PCD_DCoH_subfamily_b"/>
    <property type="match status" value="1"/>
</dbReference>
<dbReference type="Gene3D" id="3.30.1360.20">
    <property type="entry name" value="Transcriptional coactivator/pterin dehydratase"/>
    <property type="match status" value="1"/>
</dbReference>
<dbReference type="HAMAP" id="MF_00434">
    <property type="entry name" value="Pterin_4_alpha"/>
    <property type="match status" value="1"/>
</dbReference>
<dbReference type="InterPro" id="IPR036428">
    <property type="entry name" value="PCD_sf"/>
</dbReference>
<dbReference type="InterPro" id="IPR001533">
    <property type="entry name" value="Pterin_deHydtase"/>
</dbReference>
<dbReference type="NCBIfam" id="NF002017">
    <property type="entry name" value="PRK00823.1-2"/>
    <property type="match status" value="1"/>
</dbReference>
<dbReference type="NCBIfam" id="NF002018">
    <property type="entry name" value="PRK00823.1-3"/>
    <property type="match status" value="1"/>
</dbReference>
<dbReference type="PANTHER" id="PTHR12599">
    <property type="entry name" value="PTERIN-4-ALPHA-CARBINOLAMINE DEHYDRATASE"/>
    <property type="match status" value="1"/>
</dbReference>
<dbReference type="PANTHER" id="PTHR12599:SF0">
    <property type="entry name" value="PTERIN-4-ALPHA-CARBINOLAMINE DEHYDRATASE"/>
    <property type="match status" value="1"/>
</dbReference>
<dbReference type="Pfam" id="PF01329">
    <property type="entry name" value="Pterin_4a"/>
    <property type="match status" value="1"/>
</dbReference>
<dbReference type="SUPFAM" id="SSF55248">
    <property type="entry name" value="PCD-like"/>
    <property type="match status" value="1"/>
</dbReference>
<accession>Q2RNC0</accession>
<feature type="chain" id="PRO_0000231472" description="Putative pterin-4-alpha-carbinolamine dehydratase">
    <location>
        <begin position="1"/>
        <end position="96"/>
    </location>
</feature>
<keyword id="KW-0456">Lyase</keyword>
<keyword id="KW-1185">Reference proteome</keyword>
<organism>
    <name type="scientific">Rhodospirillum rubrum (strain ATCC 11170 / ATH 1.1.1 / DSM 467 / LMG 4362 / NCIMB 8255 / S1)</name>
    <dbReference type="NCBI Taxonomy" id="269796"/>
    <lineage>
        <taxon>Bacteria</taxon>
        <taxon>Pseudomonadati</taxon>
        <taxon>Pseudomonadota</taxon>
        <taxon>Alphaproteobacteria</taxon>
        <taxon>Rhodospirillales</taxon>
        <taxon>Rhodospirillaceae</taxon>
        <taxon>Rhodospirillum</taxon>
    </lineage>
</organism>
<name>PHS_RHORT</name>
<comment type="catalytic activity">
    <reaction evidence="1">
        <text>(4aS,6R)-4a-hydroxy-L-erythro-5,6,7,8-tetrahydrobiopterin = (6R)-L-erythro-6,7-dihydrobiopterin + H2O</text>
        <dbReference type="Rhea" id="RHEA:11920"/>
        <dbReference type="ChEBI" id="CHEBI:15377"/>
        <dbReference type="ChEBI" id="CHEBI:15642"/>
        <dbReference type="ChEBI" id="CHEBI:43120"/>
        <dbReference type="EC" id="4.2.1.96"/>
    </reaction>
</comment>
<comment type="similarity">
    <text evidence="1">Belongs to the pterin-4-alpha-carbinolamine dehydratase family.</text>
</comment>
<proteinExistence type="inferred from homology"/>
<evidence type="ECO:0000255" key="1">
    <source>
        <dbReference type="HAMAP-Rule" id="MF_00434"/>
    </source>
</evidence>